<gene>
    <name type="primary">HSM3</name>
    <name type="ordered locus">CAGL0I09460g</name>
</gene>
<accession>Q6FQ36</accession>
<evidence type="ECO:0000250" key="1"/>
<evidence type="ECO:0000305" key="2"/>
<protein>
    <recommendedName>
        <fullName>DNA mismatch repair protein HSM3</fullName>
    </recommendedName>
</protein>
<feature type="chain" id="PRO_0000301757" description="DNA mismatch repair protein HSM3">
    <location>
        <begin position="1"/>
        <end position="481"/>
    </location>
</feature>
<name>HSM3_CANGA</name>
<proteinExistence type="inferred from homology"/>
<organism>
    <name type="scientific">Candida glabrata (strain ATCC 2001 / BCRC 20586 / JCM 3761 / NBRC 0622 / NRRL Y-65 / CBS 138)</name>
    <name type="common">Yeast</name>
    <name type="synonym">Nakaseomyces glabratus</name>
    <dbReference type="NCBI Taxonomy" id="284593"/>
    <lineage>
        <taxon>Eukaryota</taxon>
        <taxon>Fungi</taxon>
        <taxon>Dikarya</taxon>
        <taxon>Ascomycota</taxon>
        <taxon>Saccharomycotina</taxon>
        <taxon>Saccharomycetes</taxon>
        <taxon>Saccharomycetales</taxon>
        <taxon>Saccharomycetaceae</taxon>
        <taxon>Nakaseomyces</taxon>
    </lineage>
</organism>
<keyword id="KW-0143">Chaperone</keyword>
<keyword id="KW-0963">Cytoplasm</keyword>
<keyword id="KW-0227">DNA damage</keyword>
<keyword id="KW-0234">DNA repair</keyword>
<keyword id="KW-1185">Reference proteome</keyword>
<dbReference type="EMBL" id="CR380955">
    <property type="protein sequence ID" value="CAG60595.1"/>
    <property type="molecule type" value="Genomic_DNA"/>
</dbReference>
<dbReference type="RefSeq" id="XP_447658.1">
    <property type="nucleotide sequence ID" value="XM_447658.1"/>
</dbReference>
<dbReference type="SMR" id="Q6FQ36"/>
<dbReference type="FunCoup" id="Q6FQ36">
    <property type="interactions" value="134"/>
</dbReference>
<dbReference type="STRING" id="284593.Q6FQ36"/>
<dbReference type="EnsemblFungi" id="CAGL0I09460g-T">
    <property type="protein sequence ID" value="CAGL0I09460g-T-p1"/>
    <property type="gene ID" value="CAGL0I09460g"/>
</dbReference>
<dbReference type="KEGG" id="cgr:2888931"/>
<dbReference type="CGD" id="CAL0132546">
    <property type="gene designation" value="CAGL0I09460g"/>
</dbReference>
<dbReference type="VEuPathDB" id="FungiDB:CAGL0I09460g"/>
<dbReference type="eggNOG" id="ENOG502QWEK">
    <property type="taxonomic scope" value="Eukaryota"/>
</dbReference>
<dbReference type="HOGENOM" id="CLU_044760_0_0_1"/>
<dbReference type="InParanoid" id="Q6FQ36"/>
<dbReference type="OMA" id="YMEQMVL"/>
<dbReference type="Proteomes" id="UP000002428">
    <property type="component" value="Chromosome I"/>
</dbReference>
<dbReference type="GO" id="GO:0005829">
    <property type="term" value="C:cytosol"/>
    <property type="evidence" value="ECO:0007669"/>
    <property type="project" value="EnsemblFungi"/>
</dbReference>
<dbReference type="GO" id="GO:0005634">
    <property type="term" value="C:nucleus"/>
    <property type="evidence" value="ECO:0007669"/>
    <property type="project" value="EnsemblFungi"/>
</dbReference>
<dbReference type="GO" id="GO:0044183">
    <property type="term" value="F:protein folding chaperone"/>
    <property type="evidence" value="ECO:0007669"/>
    <property type="project" value="EnsemblFungi"/>
</dbReference>
<dbReference type="GO" id="GO:0006298">
    <property type="term" value="P:mismatch repair"/>
    <property type="evidence" value="ECO:0007669"/>
    <property type="project" value="EnsemblFungi"/>
</dbReference>
<dbReference type="GO" id="GO:0070682">
    <property type="term" value="P:proteasome regulatory particle assembly"/>
    <property type="evidence" value="ECO:0007669"/>
    <property type="project" value="EnsemblFungi"/>
</dbReference>
<dbReference type="CDD" id="cd12794">
    <property type="entry name" value="Hsm3_like"/>
    <property type="match status" value="1"/>
</dbReference>
<dbReference type="Gene3D" id="1.25.10.50">
    <property type="match status" value="1"/>
</dbReference>
<dbReference type="Gene3D" id="1.25.40.580">
    <property type="match status" value="1"/>
</dbReference>
<dbReference type="InterPro" id="IPR040752">
    <property type="entry name" value="HSM3_C"/>
</dbReference>
<dbReference type="InterPro" id="IPR041335">
    <property type="entry name" value="HSM3_N"/>
</dbReference>
<dbReference type="Pfam" id="PF18794">
    <property type="entry name" value="HSM3_C"/>
    <property type="match status" value="1"/>
</dbReference>
<dbReference type="Pfam" id="PF18795">
    <property type="entry name" value="HSM3_N"/>
    <property type="match status" value="1"/>
</dbReference>
<sequence>MEQVFLEINEKLPGLLTTGGSDATFAESSKLIERCNLALISFTGTPTAVMDDTIKLMKSILASNESYNIDYDQLMDLMSQMVIKYPFDRILELFTVEELALALNSPIERLNIMTCVVVEYSEPSGLFASTTLIDILLQKYLDEDSSVNLVNSIEKVWKKTAQDELIRRRILENNYNFLSEVKNNEPNSLVFTRLLELLKICFTYLKSTEFRNSLFLISKKMIMDAVKDNILVFISICEYFTSIFSIVQDQKSQNPSKIICVRNCENTIMLFGDLFQNRSEFPDIEQFALSYLFKMFKILSYFDDLIVFEKLDNGYIHIEDGNEYLTDFLSFISPQYLYKKHLNIIKSKGHVRPSEISIIRNLCMSSDCFDIIKKNITAEDILAMPYLEQMILLEKMSQYDYSVKFLAQHLPKVMGSLISKDVKELLDRETFDFRLQVINNLIEWDVEQLHIWYEPLTEAKAQCMGTFASKDVGTKIESSFS</sequence>
<comment type="function">
    <text evidence="1">Involved in DNA mismatch repair in slow-growing cells. Acts as a chaperone during the assembly of the 26S proteasome, specifically of the base subcomplex of the 19S regulatory complex (RC) (By similarity).</text>
</comment>
<comment type="subcellular location">
    <subcellularLocation>
        <location evidence="1">Cytoplasm</location>
    </subcellularLocation>
</comment>
<comment type="similarity">
    <text evidence="2">Belongs to the proteasome subunit S5B/HSM3 family.</text>
</comment>
<reference key="1">
    <citation type="journal article" date="2004" name="Nature">
        <title>Genome evolution in yeasts.</title>
        <authorList>
            <person name="Dujon B."/>
            <person name="Sherman D."/>
            <person name="Fischer G."/>
            <person name="Durrens P."/>
            <person name="Casaregola S."/>
            <person name="Lafontaine I."/>
            <person name="de Montigny J."/>
            <person name="Marck C."/>
            <person name="Neuveglise C."/>
            <person name="Talla E."/>
            <person name="Goffard N."/>
            <person name="Frangeul L."/>
            <person name="Aigle M."/>
            <person name="Anthouard V."/>
            <person name="Babour A."/>
            <person name="Barbe V."/>
            <person name="Barnay S."/>
            <person name="Blanchin S."/>
            <person name="Beckerich J.-M."/>
            <person name="Beyne E."/>
            <person name="Bleykasten C."/>
            <person name="Boisrame A."/>
            <person name="Boyer J."/>
            <person name="Cattolico L."/>
            <person name="Confanioleri F."/>
            <person name="de Daruvar A."/>
            <person name="Despons L."/>
            <person name="Fabre E."/>
            <person name="Fairhead C."/>
            <person name="Ferry-Dumazet H."/>
            <person name="Groppi A."/>
            <person name="Hantraye F."/>
            <person name="Hennequin C."/>
            <person name="Jauniaux N."/>
            <person name="Joyet P."/>
            <person name="Kachouri R."/>
            <person name="Kerrest A."/>
            <person name="Koszul R."/>
            <person name="Lemaire M."/>
            <person name="Lesur I."/>
            <person name="Ma L."/>
            <person name="Muller H."/>
            <person name="Nicaud J.-M."/>
            <person name="Nikolski M."/>
            <person name="Oztas S."/>
            <person name="Ozier-Kalogeropoulos O."/>
            <person name="Pellenz S."/>
            <person name="Potier S."/>
            <person name="Richard G.-F."/>
            <person name="Straub M.-L."/>
            <person name="Suleau A."/>
            <person name="Swennen D."/>
            <person name="Tekaia F."/>
            <person name="Wesolowski-Louvel M."/>
            <person name="Westhof E."/>
            <person name="Wirth B."/>
            <person name="Zeniou-Meyer M."/>
            <person name="Zivanovic Y."/>
            <person name="Bolotin-Fukuhara M."/>
            <person name="Thierry A."/>
            <person name="Bouchier C."/>
            <person name="Caudron B."/>
            <person name="Scarpelli C."/>
            <person name="Gaillardin C."/>
            <person name="Weissenbach J."/>
            <person name="Wincker P."/>
            <person name="Souciet J.-L."/>
        </authorList>
    </citation>
    <scope>NUCLEOTIDE SEQUENCE [LARGE SCALE GENOMIC DNA]</scope>
    <source>
        <strain>ATCC 2001 / BCRC 20586 / JCM 3761 / NBRC 0622 / NRRL Y-65 / CBS 138</strain>
    </source>
</reference>